<protein>
    <recommendedName>
        <fullName>UPF0758 protein swp_2203</fullName>
    </recommendedName>
</protein>
<proteinExistence type="inferred from homology"/>
<comment type="similarity">
    <text evidence="2">Belongs to the UPF0758 family.</text>
</comment>
<gene>
    <name type="ordered locus">swp_2203</name>
</gene>
<sequence>MGIKDWPQGEGPREKLLLDGAEQLSDAELLAVLLRVGLKGLSAVELARMMITEFGGLRSLLTASQAQVCRLDGIGPVKFAQLQAAVEIGKRISKENLKRGKILSDPDLTRDYLMRQLGDRAYEVFAILLLDSQHRVIQFVELFRGTINSASVYPRDVVGLVLEKKAAAVIVCHNHPSGIAEPSTADRRITERLKQALQTIDVSLLDHMVVGDREIVSFAERGWID</sequence>
<name>Y2203_SHEPW</name>
<keyword id="KW-0378">Hydrolase</keyword>
<keyword id="KW-0479">Metal-binding</keyword>
<keyword id="KW-0482">Metalloprotease</keyword>
<keyword id="KW-0645">Protease</keyword>
<keyword id="KW-0862">Zinc</keyword>
<dbReference type="EMBL" id="CP000472">
    <property type="protein sequence ID" value="ACJ28953.1"/>
    <property type="molecule type" value="Genomic_DNA"/>
</dbReference>
<dbReference type="RefSeq" id="WP_020912315.1">
    <property type="nucleotide sequence ID" value="NC_011566.1"/>
</dbReference>
<dbReference type="SMR" id="B8CM29"/>
<dbReference type="STRING" id="225849.swp_2203"/>
<dbReference type="KEGG" id="swp:swp_2203"/>
<dbReference type="eggNOG" id="COG2003">
    <property type="taxonomic scope" value="Bacteria"/>
</dbReference>
<dbReference type="HOGENOM" id="CLU_073529_0_1_6"/>
<dbReference type="OrthoDB" id="9804482at2"/>
<dbReference type="Proteomes" id="UP000000753">
    <property type="component" value="Chromosome"/>
</dbReference>
<dbReference type="GO" id="GO:0046872">
    <property type="term" value="F:metal ion binding"/>
    <property type="evidence" value="ECO:0007669"/>
    <property type="project" value="UniProtKB-KW"/>
</dbReference>
<dbReference type="GO" id="GO:0008237">
    <property type="term" value="F:metallopeptidase activity"/>
    <property type="evidence" value="ECO:0007669"/>
    <property type="project" value="UniProtKB-KW"/>
</dbReference>
<dbReference type="GO" id="GO:0006508">
    <property type="term" value="P:proteolysis"/>
    <property type="evidence" value="ECO:0007669"/>
    <property type="project" value="UniProtKB-KW"/>
</dbReference>
<dbReference type="CDD" id="cd08071">
    <property type="entry name" value="MPN_DUF2466"/>
    <property type="match status" value="1"/>
</dbReference>
<dbReference type="FunFam" id="3.40.140.10:FF:000032">
    <property type="entry name" value="DNA repair protein RadC"/>
    <property type="match status" value="1"/>
</dbReference>
<dbReference type="Gene3D" id="3.40.140.10">
    <property type="entry name" value="Cytidine Deaminase, domain 2"/>
    <property type="match status" value="1"/>
</dbReference>
<dbReference type="InterPro" id="IPR037518">
    <property type="entry name" value="MPN"/>
</dbReference>
<dbReference type="InterPro" id="IPR025657">
    <property type="entry name" value="RadC_JAB"/>
</dbReference>
<dbReference type="InterPro" id="IPR010994">
    <property type="entry name" value="RuvA_2-like"/>
</dbReference>
<dbReference type="InterPro" id="IPR001405">
    <property type="entry name" value="UPF0758"/>
</dbReference>
<dbReference type="InterPro" id="IPR020891">
    <property type="entry name" value="UPF0758_CS"/>
</dbReference>
<dbReference type="InterPro" id="IPR046778">
    <property type="entry name" value="UPF0758_N"/>
</dbReference>
<dbReference type="NCBIfam" id="NF000642">
    <property type="entry name" value="PRK00024.1"/>
    <property type="match status" value="1"/>
</dbReference>
<dbReference type="NCBIfam" id="TIGR00608">
    <property type="entry name" value="radc"/>
    <property type="match status" value="1"/>
</dbReference>
<dbReference type="PANTHER" id="PTHR30471">
    <property type="entry name" value="DNA REPAIR PROTEIN RADC"/>
    <property type="match status" value="1"/>
</dbReference>
<dbReference type="PANTHER" id="PTHR30471:SF3">
    <property type="entry name" value="UPF0758 PROTEIN YEES-RELATED"/>
    <property type="match status" value="1"/>
</dbReference>
<dbReference type="Pfam" id="PF04002">
    <property type="entry name" value="RadC"/>
    <property type="match status" value="1"/>
</dbReference>
<dbReference type="Pfam" id="PF20582">
    <property type="entry name" value="UPF0758_N"/>
    <property type="match status" value="1"/>
</dbReference>
<dbReference type="SUPFAM" id="SSF102712">
    <property type="entry name" value="JAB1/MPN domain"/>
    <property type="match status" value="1"/>
</dbReference>
<dbReference type="SUPFAM" id="SSF47781">
    <property type="entry name" value="RuvA domain 2-like"/>
    <property type="match status" value="1"/>
</dbReference>
<dbReference type="PROSITE" id="PS50249">
    <property type="entry name" value="MPN"/>
    <property type="match status" value="1"/>
</dbReference>
<dbReference type="PROSITE" id="PS01302">
    <property type="entry name" value="UPF0758"/>
    <property type="match status" value="1"/>
</dbReference>
<reference key="1">
    <citation type="journal article" date="2008" name="PLoS ONE">
        <title>Environmental adaptation: genomic analysis of the piezotolerant and psychrotolerant deep-sea iron reducing bacterium Shewanella piezotolerans WP3.</title>
        <authorList>
            <person name="Wang F."/>
            <person name="Wang J."/>
            <person name="Jian H."/>
            <person name="Zhang B."/>
            <person name="Li S."/>
            <person name="Wang F."/>
            <person name="Zeng X."/>
            <person name="Gao L."/>
            <person name="Bartlett D.H."/>
            <person name="Yu J."/>
            <person name="Hu S."/>
            <person name="Xiao X."/>
        </authorList>
    </citation>
    <scope>NUCLEOTIDE SEQUENCE [LARGE SCALE GENOMIC DNA]</scope>
    <source>
        <strain>WP3 / JCM 13877</strain>
    </source>
</reference>
<accession>B8CM29</accession>
<organism>
    <name type="scientific">Shewanella piezotolerans (strain WP3 / JCM 13877)</name>
    <dbReference type="NCBI Taxonomy" id="225849"/>
    <lineage>
        <taxon>Bacteria</taxon>
        <taxon>Pseudomonadati</taxon>
        <taxon>Pseudomonadota</taxon>
        <taxon>Gammaproteobacteria</taxon>
        <taxon>Alteromonadales</taxon>
        <taxon>Shewanellaceae</taxon>
        <taxon>Shewanella</taxon>
    </lineage>
</organism>
<feature type="chain" id="PRO_1000116366" description="UPF0758 protein swp_2203">
    <location>
        <begin position="1"/>
        <end position="225"/>
    </location>
</feature>
<feature type="domain" description="MPN" evidence="1">
    <location>
        <begin position="102"/>
        <end position="224"/>
    </location>
</feature>
<feature type="short sequence motif" description="JAMM motif" evidence="1">
    <location>
        <begin position="173"/>
        <end position="186"/>
    </location>
</feature>
<feature type="binding site" evidence="1">
    <location>
        <position position="173"/>
    </location>
    <ligand>
        <name>Zn(2+)</name>
        <dbReference type="ChEBI" id="CHEBI:29105"/>
        <note>catalytic</note>
    </ligand>
</feature>
<feature type="binding site" evidence="1">
    <location>
        <position position="175"/>
    </location>
    <ligand>
        <name>Zn(2+)</name>
        <dbReference type="ChEBI" id="CHEBI:29105"/>
        <note>catalytic</note>
    </ligand>
</feature>
<feature type="binding site" evidence="1">
    <location>
        <position position="186"/>
    </location>
    <ligand>
        <name>Zn(2+)</name>
        <dbReference type="ChEBI" id="CHEBI:29105"/>
        <note>catalytic</note>
    </ligand>
</feature>
<evidence type="ECO:0000255" key="1">
    <source>
        <dbReference type="PROSITE-ProRule" id="PRU01182"/>
    </source>
</evidence>
<evidence type="ECO:0000305" key="2"/>